<name>IHFB_BURL3</name>
<comment type="function">
    <text evidence="1">This protein is one of the two subunits of integration host factor, a specific DNA-binding protein that functions in genetic recombination as well as in transcriptional and translational control.</text>
</comment>
<comment type="subunit">
    <text evidence="1">Heterodimer of an alpha and a beta chain.</text>
</comment>
<comment type="similarity">
    <text evidence="1">Belongs to the bacterial histone-like protein family.</text>
</comment>
<keyword id="KW-0233">DNA recombination</keyword>
<keyword id="KW-0238">DNA-binding</keyword>
<keyword id="KW-0804">Transcription</keyword>
<keyword id="KW-0805">Transcription regulation</keyword>
<keyword id="KW-0810">Translation regulation</keyword>
<sequence>MTKSELVAQLASRFPQLVLKDADFAVKTMLDAMSDALAKGHRIEIRGFGSFGLNRRPARVGRNPKSGEKVQVPEKFVPHFKPGKELRERVDGRAGEPLKADDPDDER</sequence>
<protein>
    <recommendedName>
        <fullName evidence="1">Integration host factor subunit beta</fullName>
        <shortName evidence="1">IHF-beta</shortName>
    </recommendedName>
</protein>
<evidence type="ECO:0000255" key="1">
    <source>
        <dbReference type="HAMAP-Rule" id="MF_00381"/>
    </source>
</evidence>
<evidence type="ECO:0000256" key="2">
    <source>
        <dbReference type="SAM" id="MobiDB-lite"/>
    </source>
</evidence>
<feature type="chain" id="PRO_1000122204" description="Integration host factor subunit beta">
    <location>
        <begin position="1"/>
        <end position="107"/>
    </location>
</feature>
<feature type="region of interest" description="Disordered" evidence="2">
    <location>
        <begin position="76"/>
        <end position="107"/>
    </location>
</feature>
<feature type="compositionally biased region" description="Basic and acidic residues" evidence="2">
    <location>
        <begin position="82"/>
        <end position="101"/>
    </location>
</feature>
<proteinExistence type="inferred from homology"/>
<accession>Q39IF8</accession>
<gene>
    <name evidence="1" type="primary">ihfB</name>
    <name evidence="1" type="synonym">himD</name>
    <name type="ordered locus">Bcep18194_A4161</name>
</gene>
<reference key="1">
    <citation type="submission" date="2005-10" db="EMBL/GenBank/DDBJ databases">
        <title>Complete sequence of chromosome 1 of Burkholderia sp. 383.</title>
        <authorList>
            <consortium name="US DOE Joint Genome Institute"/>
            <person name="Copeland A."/>
            <person name="Lucas S."/>
            <person name="Lapidus A."/>
            <person name="Barry K."/>
            <person name="Detter J.C."/>
            <person name="Glavina T."/>
            <person name="Hammon N."/>
            <person name="Israni S."/>
            <person name="Pitluck S."/>
            <person name="Chain P."/>
            <person name="Malfatti S."/>
            <person name="Shin M."/>
            <person name="Vergez L."/>
            <person name="Schmutz J."/>
            <person name="Larimer F."/>
            <person name="Land M."/>
            <person name="Kyrpides N."/>
            <person name="Lykidis A."/>
            <person name="Richardson P."/>
        </authorList>
    </citation>
    <scope>NUCLEOTIDE SEQUENCE [LARGE SCALE GENOMIC DNA]</scope>
    <source>
        <strain>ATCC 17760 / DSM 23089 / LMG 22485 / NCIMB 9086 / R18194 / 383</strain>
    </source>
</reference>
<dbReference type="EMBL" id="CP000151">
    <property type="protein sequence ID" value="ABB07758.1"/>
    <property type="molecule type" value="Genomic_DNA"/>
</dbReference>
<dbReference type="RefSeq" id="WP_006486894.1">
    <property type="nucleotide sequence ID" value="NZ_WNDV01000026.1"/>
</dbReference>
<dbReference type="SMR" id="Q39IF8"/>
<dbReference type="KEGG" id="bur:Bcep18194_A4161"/>
<dbReference type="HOGENOM" id="CLU_105066_2_0_4"/>
<dbReference type="Proteomes" id="UP000002705">
    <property type="component" value="Chromosome 1"/>
</dbReference>
<dbReference type="GO" id="GO:0005694">
    <property type="term" value="C:chromosome"/>
    <property type="evidence" value="ECO:0007669"/>
    <property type="project" value="InterPro"/>
</dbReference>
<dbReference type="GO" id="GO:0005829">
    <property type="term" value="C:cytosol"/>
    <property type="evidence" value="ECO:0007669"/>
    <property type="project" value="TreeGrafter"/>
</dbReference>
<dbReference type="GO" id="GO:0003677">
    <property type="term" value="F:DNA binding"/>
    <property type="evidence" value="ECO:0007669"/>
    <property type="project" value="UniProtKB-UniRule"/>
</dbReference>
<dbReference type="GO" id="GO:0030527">
    <property type="term" value="F:structural constituent of chromatin"/>
    <property type="evidence" value="ECO:0007669"/>
    <property type="project" value="InterPro"/>
</dbReference>
<dbReference type="GO" id="GO:0006310">
    <property type="term" value="P:DNA recombination"/>
    <property type="evidence" value="ECO:0007669"/>
    <property type="project" value="UniProtKB-UniRule"/>
</dbReference>
<dbReference type="GO" id="GO:0006355">
    <property type="term" value="P:regulation of DNA-templated transcription"/>
    <property type="evidence" value="ECO:0007669"/>
    <property type="project" value="UniProtKB-UniRule"/>
</dbReference>
<dbReference type="GO" id="GO:0006417">
    <property type="term" value="P:regulation of translation"/>
    <property type="evidence" value="ECO:0007669"/>
    <property type="project" value="UniProtKB-UniRule"/>
</dbReference>
<dbReference type="CDD" id="cd13836">
    <property type="entry name" value="IHF_B"/>
    <property type="match status" value="1"/>
</dbReference>
<dbReference type="Gene3D" id="4.10.520.10">
    <property type="entry name" value="IHF-like DNA-binding proteins"/>
    <property type="match status" value="1"/>
</dbReference>
<dbReference type="HAMAP" id="MF_00381">
    <property type="entry name" value="IHF_beta"/>
    <property type="match status" value="1"/>
</dbReference>
<dbReference type="InterPro" id="IPR000119">
    <property type="entry name" value="Hist_DNA-bd"/>
</dbReference>
<dbReference type="InterPro" id="IPR010992">
    <property type="entry name" value="IHF-like_DNA-bd_dom_sf"/>
</dbReference>
<dbReference type="InterPro" id="IPR005685">
    <property type="entry name" value="IHF_beta"/>
</dbReference>
<dbReference type="NCBIfam" id="TIGR00988">
    <property type="entry name" value="hip"/>
    <property type="match status" value="1"/>
</dbReference>
<dbReference type="NCBIfam" id="NF001222">
    <property type="entry name" value="PRK00199.1"/>
    <property type="match status" value="1"/>
</dbReference>
<dbReference type="PANTHER" id="PTHR33175">
    <property type="entry name" value="DNA-BINDING PROTEIN HU"/>
    <property type="match status" value="1"/>
</dbReference>
<dbReference type="PANTHER" id="PTHR33175:SF5">
    <property type="entry name" value="INTEGRATION HOST FACTOR SUBUNIT BETA"/>
    <property type="match status" value="1"/>
</dbReference>
<dbReference type="Pfam" id="PF00216">
    <property type="entry name" value="Bac_DNA_binding"/>
    <property type="match status" value="1"/>
</dbReference>
<dbReference type="PRINTS" id="PR01727">
    <property type="entry name" value="DNABINDINGHU"/>
</dbReference>
<dbReference type="SMART" id="SM00411">
    <property type="entry name" value="BHL"/>
    <property type="match status" value="1"/>
</dbReference>
<dbReference type="SUPFAM" id="SSF47729">
    <property type="entry name" value="IHF-like DNA-binding proteins"/>
    <property type="match status" value="1"/>
</dbReference>
<organism>
    <name type="scientific">Burkholderia lata (strain ATCC 17760 / DSM 23089 / LMG 22485 / NCIMB 9086 / R18194 / 383)</name>
    <dbReference type="NCBI Taxonomy" id="482957"/>
    <lineage>
        <taxon>Bacteria</taxon>
        <taxon>Pseudomonadati</taxon>
        <taxon>Pseudomonadota</taxon>
        <taxon>Betaproteobacteria</taxon>
        <taxon>Burkholderiales</taxon>
        <taxon>Burkholderiaceae</taxon>
        <taxon>Burkholderia</taxon>
        <taxon>Burkholderia cepacia complex</taxon>
    </lineage>
</organism>